<evidence type="ECO:0000250" key="1"/>
<evidence type="ECO:0000255" key="2">
    <source>
        <dbReference type="HAMAP-Rule" id="MF_01057"/>
    </source>
</evidence>
<protein>
    <recommendedName>
        <fullName evidence="2">tRNA (guanine-N(7)-)-methyltransferase</fullName>
        <ecNumber evidence="2">2.1.1.33</ecNumber>
    </recommendedName>
    <alternativeName>
        <fullName evidence="2">tRNA (guanine(46)-N(7))-methyltransferase</fullName>
    </alternativeName>
    <alternativeName>
        <fullName evidence="2">tRNA(m7G46)-methyltransferase</fullName>
    </alternativeName>
</protein>
<gene>
    <name evidence="2" type="primary">trmB</name>
    <name type="ordered locus">plu1170</name>
</gene>
<organism>
    <name type="scientific">Photorhabdus laumondii subsp. laumondii (strain DSM 15139 / CIP 105565 / TT01)</name>
    <name type="common">Photorhabdus luminescens subsp. laumondii</name>
    <dbReference type="NCBI Taxonomy" id="243265"/>
    <lineage>
        <taxon>Bacteria</taxon>
        <taxon>Pseudomonadati</taxon>
        <taxon>Pseudomonadota</taxon>
        <taxon>Gammaproteobacteria</taxon>
        <taxon>Enterobacterales</taxon>
        <taxon>Morganellaceae</taxon>
        <taxon>Photorhabdus</taxon>
    </lineage>
</organism>
<keyword id="KW-0489">Methyltransferase</keyword>
<keyword id="KW-1185">Reference proteome</keyword>
<keyword id="KW-0949">S-adenosyl-L-methionine</keyword>
<keyword id="KW-0808">Transferase</keyword>
<keyword id="KW-0819">tRNA processing</keyword>
<proteinExistence type="inferred from homology"/>
<accession>Q7N7H9</accession>
<dbReference type="EC" id="2.1.1.33" evidence="2"/>
<dbReference type="EMBL" id="BX571862">
    <property type="protein sequence ID" value="CAE13464.1"/>
    <property type="molecule type" value="Genomic_DNA"/>
</dbReference>
<dbReference type="RefSeq" id="WP_011145497.1">
    <property type="nucleotide sequence ID" value="NC_005126.1"/>
</dbReference>
<dbReference type="SMR" id="Q7N7H9"/>
<dbReference type="STRING" id="243265.plu1170"/>
<dbReference type="GeneID" id="48847440"/>
<dbReference type="KEGG" id="plu:plu1170"/>
<dbReference type="eggNOG" id="COG0220">
    <property type="taxonomic scope" value="Bacteria"/>
</dbReference>
<dbReference type="HOGENOM" id="CLU_050910_0_1_6"/>
<dbReference type="OrthoDB" id="9802090at2"/>
<dbReference type="UniPathway" id="UPA00989"/>
<dbReference type="Proteomes" id="UP000002514">
    <property type="component" value="Chromosome"/>
</dbReference>
<dbReference type="GO" id="GO:0043527">
    <property type="term" value="C:tRNA methyltransferase complex"/>
    <property type="evidence" value="ECO:0007669"/>
    <property type="project" value="TreeGrafter"/>
</dbReference>
<dbReference type="GO" id="GO:0008176">
    <property type="term" value="F:tRNA (guanine(46)-N7)-methyltransferase activity"/>
    <property type="evidence" value="ECO:0007669"/>
    <property type="project" value="UniProtKB-UniRule"/>
</dbReference>
<dbReference type="FunFam" id="3.40.50.150:FF:000024">
    <property type="entry name" value="tRNA (guanine-N(7)-)-methyltransferase"/>
    <property type="match status" value="1"/>
</dbReference>
<dbReference type="Gene3D" id="3.40.50.150">
    <property type="entry name" value="Vaccinia Virus protein VP39"/>
    <property type="match status" value="1"/>
</dbReference>
<dbReference type="HAMAP" id="MF_01057">
    <property type="entry name" value="tRNA_methyltr_TrmB"/>
    <property type="match status" value="1"/>
</dbReference>
<dbReference type="InterPro" id="IPR029063">
    <property type="entry name" value="SAM-dependent_MTases_sf"/>
</dbReference>
<dbReference type="InterPro" id="IPR003358">
    <property type="entry name" value="tRNA_(Gua-N-7)_MeTrfase_Trmb"/>
</dbReference>
<dbReference type="InterPro" id="IPR055361">
    <property type="entry name" value="tRNA_methyltr_TrmB_bact"/>
</dbReference>
<dbReference type="NCBIfam" id="TIGR00091">
    <property type="entry name" value="tRNA (guanosine(46)-N7)-methyltransferase TrmB"/>
    <property type="match status" value="1"/>
</dbReference>
<dbReference type="PANTHER" id="PTHR23417">
    <property type="entry name" value="3-DEOXY-D-MANNO-OCTULOSONIC-ACID TRANSFERASE/TRNA GUANINE-N 7 - -METHYLTRANSFERASE"/>
    <property type="match status" value="1"/>
</dbReference>
<dbReference type="PANTHER" id="PTHR23417:SF14">
    <property type="entry name" value="PENTACOTRIPEPTIDE-REPEAT REGION OF PRORP DOMAIN-CONTAINING PROTEIN"/>
    <property type="match status" value="1"/>
</dbReference>
<dbReference type="Pfam" id="PF02390">
    <property type="entry name" value="Methyltransf_4"/>
    <property type="match status" value="1"/>
</dbReference>
<dbReference type="SUPFAM" id="SSF53335">
    <property type="entry name" value="S-adenosyl-L-methionine-dependent methyltransferases"/>
    <property type="match status" value="1"/>
</dbReference>
<dbReference type="PROSITE" id="PS51625">
    <property type="entry name" value="SAM_MT_TRMB"/>
    <property type="match status" value="1"/>
</dbReference>
<sequence length="239" mass="27271">MINNVISPEFDENGRALRRVRSFVRRQGRLTNRQQQALDNLWPKIGVEYQAEKLELGALFGREAPVVLEIGFGMGASLVTMASQNPEKDFLGIEVHVPGVGACLASAEDENIGNLRVMCHDAIEVLENMIPDNRLEMVQLFFPDPWHKVRHNKRRIVQPPFAELIKSKLKVGGVFHMATDWQPYAEHMLEVMNGVDNYLNLSENGDYVPRPSSRPITKFELRGQRLGHGVWDIMFKRIK</sequence>
<feature type="chain" id="PRO_0000171369" description="tRNA (guanine-N(7)-)-methyltransferase">
    <location>
        <begin position="1"/>
        <end position="239"/>
    </location>
</feature>
<feature type="region of interest" description="Interaction with RNA" evidence="2">
    <location>
        <begin position="150"/>
        <end position="155"/>
    </location>
</feature>
<feature type="active site" evidence="1">
    <location>
        <position position="144"/>
    </location>
</feature>
<feature type="binding site" evidence="2">
    <location>
        <position position="69"/>
    </location>
    <ligand>
        <name>S-adenosyl-L-methionine</name>
        <dbReference type="ChEBI" id="CHEBI:59789"/>
    </ligand>
</feature>
<feature type="binding site" evidence="2">
    <location>
        <position position="94"/>
    </location>
    <ligand>
        <name>S-adenosyl-L-methionine</name>
        <dbReference type="ChEBI" id="CHEBI:59789"/>
    </ligand>
</feature>
<feature type="binding site" evidence="2">
    <location>
        <position position="121"/>
    </location>
    <ligand>
        <name>S-adenosyl-L-methionine</name>
        <dbReference type="ChEBI" id="CHEBI:59789"/>
    </ligand>
</feature>
<feature type="binding site" evidence="2">
    <location>
        <position position="144"/>
    </location>
    <ligand>
        <name>S-adenosyl-L-methionine</name>
        <dbReference type="ChEBI" id="CHEBI:59789"/>
    </ligand>
</feature>
<feature type="binding site" evidence="2">
    <location>
        <position position="148"/>
    </location>
    <ligand>
        <name>substrate</name>
    </ligand>
</feature>
<feature type="binding site" evidence="2">
    <location>
        <position position="180"/>
    </location>
    <ligand>
        <name>substrate</name>
    </ligand>
</feature>
<feature type="binding site" evidence="2">
    <location>
        <begin position="217"/>
        <end position="220"/>
    </location>
    <ligand>
        <name>substrate</name>
    </ligand>
</feature>
<name>TRMB_PHOLL</name>
<comment type="function">
    <text evidence="2">Catalyzes the formation of N(7)-methylguanine at position 46 (m7G46) in tRNA.</text>
</comment>
<comment type="catalytic activity">
    <reaction evidence="2">
        <text>guanosine(46) in tRNA + S-adenosyl-L-methionine = N(7)-methylguanosine(46) in tRNA + S-adenosyl-L-homocysteine</text>
        <dbReference type="Rhea" id="RHEA:42708"/>
        <dbReference type="Rhea" id="RHEA-COMP:10188"/>
        <dbReference type="Rhea" id="RHEA-COMP:10189"/>
        <dbReference type="ChEBI" id="CHEBI:57856"/>
        <dbReference type="ChEBI" id="CHEBI:59789"/>
        <dbReference type="ChEBI" id="CHEBI:74269"/>
        <dbReference type="ChEBI" id="CHEBI:74480"/>
        <dbReference type="EC" id="2.1.1.33"/>
    </reaction>
</comment>
<comment type="pathway">
    <text evidence="2">tRNA modification; N(7)-methylguanine-tRNA biosynthesis.</text>
</comment>
<comment type="subunit">
    <text evidence="2">Monomer.</text>
</comment>
<comment type="similarity">
    <text evidence="2">Belongs to the class I-like SAM-binding methyltransferase superfamily. TrmB family.</text>
</comment>
<reference key="1">
    <citation type="journal article" date="2003" name="Nat. Biotechnol.">
        <title>The genome sequence of the entomopathogenic bacterium Photorhabdus luminescens.</title>
        <authorList>
            <person name="Duchaud E."/>
            <person name="Rusniok C."/>
            <person name="Frangeul L."/>
            <person name="Buchrieser C."/>
            <person name="Givaudan A."/>
            <person name="Taourit S."/>
            <person name="Bocs S."/>
            <person name="Boursaux-Eude C."/>
            <person name="Chandler M."/>
            <person name="Charles J.-F."/>
            <person name="Dassa E."/>
            <person name="Derose R."/>
            <person name="Derzelle S."/>
            <person name="Freyssinet G."/>
            <person name="Gaudriault S."/>
            <person name="Medigue C."/>
            <person name="Lanois A."/>
            <person name="Powell K."/>
            <person name="Siguier P."/>
            <person name="Vincent R."/>
            <person name="Wingate V."/>
            <person name="Zouine M."/>
            <person name="Glaser P."/>
            <person name="Boemare N."/>
            <person name="Danchin A."/>
            <person name="Kunst F."/>
        </authorList>
    </citation>
    <scope>NUCLEOTIDE SEQUENCE [LARGE SCALE GENOMIC DNA]</scope>
    <source>
        <strain>DSM 15139 / CIP 105565 / TT01</strain>
    </source>
</reference>